<evidence type="ECO:0000305" key="1"/>
<reference key="1">
    <citation type="journal article" date="2003" name="Infect. Immun.">
        <title>Genetic analysis of the capsule locus of Haemophilus influenzae serotype f.</title>
        <authorList>
            <person name="Satola S.W."/>
            <person name="Schirmer P.L."/>
            <person name="Farley M.M."/>
        </authorList>
    </citation>
    <scope>NUCLEOTIDE SEQUENCE [GENOMIC DNA]</scope>
    <source>
        <strain>700222 / Serotype F</strain>
    </source>
</reference>
<reference key="2">
    <citation type="journal article" date="2005" name="PLoS Comput. Biol.">
        <title>Stealth proteins: in silico identification of a novel protein family rendering bacterial pathogens invisible to host immune defense.</title>
        <authorList>
            <person name="Sperisen P."/>
            <person name="Schmid C.D."/>
            <person name="Bucher P."/>
            <person name="Zilian O."/>
        </authorList>
    </citation>
    <scope>IDENTIFICATION AS A STEALTH PROTEIN</scope>
    <scope>PREDICTION OF FUNCTION</scope>
</reference>
<dbReference type="EC" id="2.7.-.-"/>
<dbReference type="EMBL" id="AF549211">
    <property type="protein sequence ID" value="AAQ12659.1"/>
    <property type="molecule type" value="Genomic_DNA"/>
</dbReference>
<dbReference type="SMR" id="Q714U9"/>
<dbReference type="GO" id="GO:0016772">
    <property type="term" value="F:transferase activity, transferring phosphorus-containing groups"/>
    <property type="evidence" value="ECO:0007669"/>
    <property type="project" value="InterPro"/>
</dbReference>
<dbReference type="GO" id="GO:0000271">
    <property type="term" value="P:polysaccharide biosynthetic process"/>
    <property type="evidence" value="ECO:0007669"/>
    <property type="project" value="UniProtKB-KW"/>
</dbReference>
<dbReference type="InterPro" id="IPR047141">
    <property type="entry name" value="Stealth"/>
</dbReference>
<dbReference type="InterPro" id="IPR031358">
    <property type="entry name" value="Stealth_CR1"/>
</dbReference>
<dbReference type="InterPro" id="IPR021520">
    <property type="entry name" value="Stealth_CR2"/>
</dbReference>
<dbReference type="InterPro" id="IPR031357">
    <property type="entry name" value="Stealth_CR3"/>
</dbReference>
<dbReference type="PANTHER" id="PTHR24045">
    <property type="match status" value="1"/>
</dbReference>
<dbReference type="PANTHER" id="PTHR24045:SF0">
    <property type="entry name" value="N-ACETYLGLUCOSAMINE-1-PHOSPHOTRANSFERASE SUBUNITS ALPHA_BETA"/>
    <property type="match status" value="1"/>
</dbReference>
<dbReference type="Pfam" id="PF17101">
    <property type="entry name" value="Stealth_CR1"/>
    <property type="match status" value="1"/>
</dbReference>
<dbReference type="Pfam" id="PF11380">
    <property type="entry name" value="Stealth_CR2"/>
    <property type="match status" value="1"/>
</dbReference>
<dbReference type="Pfam" id="PF17102">
    <property type="entry name" value="Stealth_CR3"/>
    <property type="match status" value="1"/>
</dbReference>
<accession>Q714U9</accession>
<keyword id="KW-0270">Exopolysaccharide synthesis</keyword>
<keyword id="KW-0808">Transferase</keyword>
<name>FCS1_HAEIF</name>
<feature type="chain" id="PRO_0000235945" description="Capsular polysaccharide phosphotransferase fcs1">
    <location>
        <begin position="1"/>
        <end position="364"/>
    </location>
</feature>
<organism>
    <name type="scientific">Haemophilus influenzae</name>
    <dbReference type="NCBI Taxonomy" id="727"/>
    <lineage>
        <taxon>Bacteria</taxon>
        <taxon>Pseudomonadati</taxon>
        <taxon>Pseudomonadota</taxon>
        <taxon>Gammaproteobacteria</taxon>
        <taxon>Pasteurellales</taxon>
        <taxon>Pasteurellaceae</taxon>
        <taxon>Haemophilus</taxon>
    </lineage>
</organism>
<comment type="function">
    <text>Part of a group II capsule biosynthesis locus.</text>
</comment>
<comment type="miscellaneous">
    <text>Stealth proteins are part of a protein family that is conserved from bacteria to higher eukaryotes. Family members were first identified in microbes as proteins that help pathogens to elude the host innate immune system. Microbial stealth proteins are involved in the biosynthesis of exopolysaccharides. Stealth proteins are predicted to function as hexose-1-phosphoryltransferases.</text>
</comment>
<comment type="similarity">
    <text evidence="1">Belongs to the stealth family.</text>
</comment>
<proteinExistence type="inferred from homology"/>
<gene>
    <name type="primary">fcs1</name>
</gene>
<protein>
    <recommendedName>
        <fullName>Capsular polysaccharide phosphotransferase fcs1</fullName>
        <ecNumber>2.7.-.-</ecNumber>
    </recommendedName>
    <alternativeName>
        <fullName>Stealth protein fcs1</fullName>
    </alternativeName>
</protein>
<sequence>MKKLKKFVTKPHIFFRDALNNKYPIINNEQGIKELDERAVLSHQENLEKLESSLMNTPIPIDVVFTWVNDKDEKWQEKKQHYSKLANNYAFYAKDNVRFEEHNELFYSVKSVQKFLPWVRYIFIVTDNQIPHWLNNEDSQIKIVDHREIIDHDYLPTFNSHVIEANLHKIPNLSEHFIYFNDDVFVAKPLKKSHFFKPNGLASIFLSIKNLDKMYAKGTTTPTLLASMNSRRLLRKMYGQELNIQTPLIHSYIPLKKSVFEKIWSVFKEEIESFLSNRFRGKNDLNLATFFVPYAMYLEGKSVLTPEICYYFNIRSANAKAQYKKLLQKKENGNRPHSFCINDTSSSNNHFYHKNFNTFINLYF</sequence>